<accession>O58686</accession>
<dbReference type="EC" id="3.1.-.-" evidence="1"/>
<dbReference type="EMBL" id="BA000001">
    <property type="protein sequence ID" value="BAA30026.1"/>
    <property type="molecule type" value="Genomic_DNA"/>
</dbReference>
<dbReference type="PIR" id="D71083">
    <property type="entry name" value="D71083"/>
</dbReference>
<dbReference type="RefSeq" id="WP_010885021.1">
    <property type="nucleotide sequence ID" value="NC_000961.1"/>
</dbReference>
<dbReference type="SMR" id="O58686"/>
<dbReference type="STRING" id="70601.gene:9377884"/>
<dbReference type="EnsemblBacteria" id="BAA30026">
    <property type="protein sequence ID" value="BAA30026"/>
    <property type="gene ID" value="BAA30026"/>
</dbReference>
<dbReference type="GeneID" id="1443256"/>
<dbReference type="KEGG" id="pho:PH0930"/>
<dbReference type="eggNOG" id="arCOG00397">
    <property type="taxonomic scope" value="Archaea"/>
</dbReference>
<dbReference type="OrthoDB" id="11638at2157"/>
<dbReference type="Proteomes" id="UP000000752">
    <property type="component" value="Chromosome"/>
</dbReference>
<dbReference type="GO" id="GO:0008408">
    <property type="term" value="F:3'-5' exonuclease activity"/>
    <property type="evidence" value="ECO:0007669"/>
    <property type="project" value="UniProtKB-UniRule"/>
</dbReference>
<dbReference type="GO" id="GO:0045027">
    <property type="term" value="F:DNA end binding"/>
    <property type="evidence" value="ECO:0007669"/>
    <property type="project" value="UniProtKB-UniRule"/>
</dbReference>
<dbReference type="GO" id="GO:0004519">
    <property type="term" value="F:endonuclease activity"/>
    <property type="evidence" value="ECO:0007669"/>
    <property type="project" value="UniProtKB-UniRule"/>
</dbReference>
<dbReference type="GO" id="GO:0030145">
    <property type="term" value="F:manganese ion binding"/>
    <property type="evidence" value="ECO:0007669"/>
    <property type="project" value="UniProtKB-UniRule"/>
</dbReference>
<dbReference type="GO" id="GO:0000403">
    <property type="term" value="F:Y-form DNA binding"/>
    <property type="evidence" value="ECO:0007669"/>
    <property type="project" value="UniProtKB-UniRule"/>
</dbReference>
<dbReference type="GO" id="GO:0000729">
    <property type="term" value="P:DNA double-strand break processing"/>
    <property type="evidence" value="ECO:0007669"/>
    <property type="project" value="InterPro"/>
</dbReference>
<dbReference type="CDD" id="cd00840">
    <property type="entry name" value="MPP_Mre11_N"/>
    <property type="match status" value="1"/>
</dbReference>
<dbReference type="Gene3D" id="3.60.21.10">
    <property type="match status" value="1"/>
</dbReference>
<dbReference type="Gene3D" id="3.30.110.80">
    <property type="entry name" value="DNA double-strand break repair nuclease"/>
    <property type="match status" value="1"/>
</dbReference>
<dbReference type="HAMAP" id="MF_02044">
    <property type="entry name" value="Mre11"/>
    <property type="match status" value="1"/>
</dbReference>
<dbReference type="InterPro" id="IPR004843">
    <property type="entry name" value="Calcineurin-like_PHP_ApaH"/>
</dbReference>
<dbReference type="InterPro" id="IPR050535">
    <property type="entry name" value="DNA_Repair-Maintenance_Comp"/>
</dbReference>
<dbReference type="InterPro" id="IPR029052">
    <property type="entry name" value="Metallo-depent_PP-like"/>
</dbReference>
<dbReference type="InterPro" id="IPR032885">
    <property type="entry name" value="Mre11_archaea-type"/>
</dbReference>
<dbReference type="InterPro" id="IPR054741">
    <property type="entry name" value="Mre11_dom"/>
</dbReference>
<dbReference type="InterPro" id="IPR041796">
    <property type="entry name" value="Mre11_N"/>
</dbReference>
<dbReference type="InterPro" id="IPR054745">
    <property type="entry name" value="Mre11_thermococcales"/>
</dbReference>
<dbReference type="NCBIfam" id="NF041029">
    <property type="entry name" value="Mre11_Pyroc"/>
    <property type="match status" value="1"/>
</dbReference>
<dbReference type="PANTHER" id="PTHR30337">
    <property type="entry name" value="COMPONENT OF ATP-DEPENDENT DSDNA EXONUCLEASE"/>
    <property type="match status" value="1"/>
</dbReference>
<dbReference type="PANTHER" id="PTHR30337:SF0">
    <property type="entry name" value="NUCLEASE SBCCD SUBUNIT D"/>
    <property type="match status" value="1"/>
</dbReference>
<dbReference type="Pfam" id="PF00149">
    <property type="entry name" value="Metallophos"/>
    <property type="match status" value="1"/>
</dbReference>
<dbReference type="Pfam" id="PF22411">
    <property type="entry name" value="Mre11_2nd"/>
    <property type="match status" value="1"/>
</dbReference>
<dbReference type="SUPFAM" id="SSF56300">
    <property type="entry name" value="Metallo-dependent phosphatases"/>
    <property type="match status" value="1"/>
</dbReference>
<reference key="1">
    <citation type="journal article" date="1998" name="DNA Res.">
        <title>Complete sequence and gene organization of the genome of a hyper-thermophilic archaebacterium, Pyrococcus horikoshii OT3.</title>
        <authorList>
            <person name="Kawarabayasi Y."/>
            <person name="Sawada M."/>
            <person name="Horikawa H."/>
            <person name="Haikawa Y."/>
            <person name="Hino Y."/>
            <person name="Yamamoto S."/>
            <person name="Sekine M."/>
            <person name="Baba S."/>
            <person name="Kosugi H."/>
            <person name="Hosoyama A."/>
            <person name="Nagai Y."/>
            <person name="Sakai M."/>
            <person name="Ogura K."/>
            <person name="Otsuka R."/>
            <person name="Nakazawa H."/>
            <person name="Takamiya M."/>
            <person name="Ohfuku Y."/>
            <person name="Funahashi T."/>
            <person name="Tanaka T."/>
            <person name="Kudoh Y."/>
            <person name="Yamazaki J."/>
            <person name="Kushida N."/>
            <person name="Oguchi A."/>
            <person name="Aoki K."/>
            <person name="Yoshizawa T."/>
            <person name="Nakamura Y."/>
            <person name="Robb F.T."/>
            <person name="Horikoshi K."/>
            <person name="Masuchi Y."/>
            <person name="Shizuya H."/>
            <person name="Kikuchi H."/>
        </authorList>
    </citation>
    <scope>NUCLEOTIDE SEQUENCE [LARGE SCALE GENOMIC DNA]</scope>
    <source>
        <strain>ATCC 700860 / DSM 12428 / JCM 9974 / NBRC 100139 / OT-3</strain>
    </source>
</reference>
<keyword id="KW-0227">DNA damage</keyword>
<keyword id="KW-0234">DNA repair</keyword>
<keyword id="KW-0255">Endonuclease</keyword>
<keyword id="KW-0269">Exonuclease</keyword>
<keyword id="KW-0378">Hydrolase</keyword>
<keyword id="KW-0464">Manganese</keyword>
<keyword id="KW-0479">Metal-binding</keyword>
<keyword id="KW-0540">Nuclease</keyword>
<evidence type="ECO:0000255" key="1">
    <source>
        <dbReference type="HAMAP-Rule" id="MF_02044"/>
    </source>
</evidence>
<evidence type="ECO:0000256" key="2">
    <source>
        <dbReference type="SAM" id="MobiDB-lite"/>
    </source>
</evidence>
<feature type="chain" id="PRO_0000138697" description="DNA double-strand break repair protein Mre11">
    <location>
        <begin position="1"/>
        <end position="413"/>
    </location>
</feature>
<feature type="region of interest" description="Disordered" evidence="2">
    <location>
        <begin position="389"/>
        <end position="413"/>
    </location>
</feature>
<feature type="compositionally biased region" description="Basic and acidic residues" evidence="2">
    <location>
        <begin position="389"/>
        <end position="402"/>
    </location>
</feature>
<feature type="active site" description="Proton donor" evidence="1">
    <location>
        <position position="85"/>
    </location>
</feature>
<feature type="binding site" evidence="1">
    <location>
        <position position="8"/>
    </location>
    <ligand>
        <name>Mn(2+)</name>
        <dbReference type="ChEBI" id="CHEBI:29035"/>
        <label>1</label>
    </ligand>
</feature>
<feature type="binding site" evidence="1">
    <location>
        <position position="10"/>
    </location>
    <ligand>
        <name>Mn(2+)</name>
        <dbReference type="ChEBI" id="CHEBI:29035"/>
        <label>1</label>
    </ligand>
</feature>
<feature type="binding site" evidence="1">
    <location>
        <position position="49"/>
    </location>
    <ligand>
        <name>Mn(2+)</name>
        <dbReference type="ChEBI" id="CHEBI:29035"/>
        <label>1</label>
    </ligand>
</feature>
<feature type="binding site" evidence="1">
    <location>
        <position position="49"/>
    </location>
    <ligand>
        <name>Mn(2+)</name>
        <dbReference type="ChEBI" id="CHEBI:29035"/>
        <label>2</label>
    </ligand>
</feature>
<feature type="binding site" evidence="1">
    <location>
        <position position="84"/>
    </location>
    <ligand>
        <name>Mn(2+)</name>
        <dbReference type="ChEBI" id="CHEBI:29035"/>
        <label>2</label>
    </ligand>
</feature>
<feature type="binding site" evidence="1">
    <location>
        <position position="172"/>
    </location>
    <ligand>
        <name>Mn(2+)</name>
        <dbReference type="ChEBI" id="CHEBI:29035"/>
        <label>2</label>
    </ligand>
</feature>
<feature type="binding site" evidence="1">
    <location>
        <position position="206"/>
    </location>
    <ligand>
        <name>Mn(2+)</name>
        <dbReference type="ChEBI" id="CHEBI:29035"/>
        <label>2</label>
    </ligand>
</feature>
<feature type="binding site" evidence="1">
    <location>
        <position position="208"/>
    </location>
    <ligand>
        <name>Mn(2+)</name>
        <dbReference type="ChEBI" id="CHEBI:29035"/>
        <label>1</label>
    </ligand>
</feature>
<gene>
    <name evidence="1" type="primary">mre11</name>
    <name type="ordered locus">PH0930</name>
</gene>
<proteinExistence type="inferred from homology"/>
<sequence length="413" mass="48043">MKFAHLADVHLGYEQFNKPQRAEEFANTFKKALEMCVKESVDFIIIAGDLFNSSRPSPGTIKTAIKLLQIPKENNIPVFAIEGNHDRTQRGPSVLHLLEDLGLLYVIGLRQERVENEYLTSERVGNYWLVKGVYDNLEIHGMKYMSSAWFEANLNFFKGIFRPDEDAILVLHQGIRDITEKVFPSYSAELKLSDLPRGYLYYALGHVHKRFETNYGDSPVVYPGSLERWDFGDYAKRLVWNGVTFREEVGSDKGFYIVEDFTPRFVNIKVRDFIDVVIKGDSEREIKKAVKASLPHIPRNSYVRFNIKWRKPFDVEWIKEIVNAEYLRIHTAIIKDEKSMNGESVDIKSFFTEQEWKVIDLASSDEFESYIEKIVDILSGYEKKEEREKKESKIRKFERPKNPGDLTAWLRGG</sequence>
<organism>
    <name type="scientific">Pyrococcus horikoshii (strain ATCC 700860 / DSM 12428 / JCM 9974 / NBRC 100139 / OT-3)</name>
    <dbReference type="NCBI Taxonomy" id="70601"/>
    <lineage>
        <taxon>Archaea</taxon>
        <taxon>Methanobacteriati</taxon>
        <taxon>Methanobacteriota</taxon>
        <taxon>Thermococci</taxon>
        <taxon>Thermococcales</taxon>
        <taxon>Thermococcaceae</taxon>
        <taxon>Pyrococcus</taxon>
    </lineage>
</organism>
<protein>
    <recommendedName>
        <fullName evidence="1">DNA double-strand break repair protein Mre11</fullName>
        <ecNumber evidence="1">3.1.-.-</ecNumber>
    </recommendedName>
</protein>
<comment type="function">
    <text evidence="1">Part of the Rad50/Mre11 complex, which is involved in the early steps of DNA double-strand break (DSB) repair. The complex may facilitate opening of the processed DNA ends to aid in the recruitment of HerA and NurA. Mre11 binds to DSB ends and has both double-stranded 3'-5' exonuclease activity and single-stranded endonuclease activity.</text>
</comment>
<comment type="cofactor">
    <cofactor evidence="1">
        <name>Mn(2+)</name>
        <dbReference type="ChEBI" id="CHEBI:29035"/>
    </cofactor>
    <text evidence="1">Binds 2 manganese ions per subunit.</text>
</comment>
<comment type="activity regulation">
    <text evidence="1">Nuclease activity is regulated by Rad50.</text>
</comment>
<comment type="subunit">
    <text evidence="1">Homodimer. Forms a heterotetramer composed of two Mre11 subunits and two Rad50 subunits.</text>
</comment>
<comment type="similarity">
    <text evidence="1">Belongs to the MRE11/RAD32 family.</text>
</comment>
<name>MRE11_PYRHO</name>